<reference key="1">
    <citation type="submission" date="2006-10" db="EMBL/GenBank/DDBJ databases">
        <title>Complete sequence of Methanosaeta thermophila PT.</title>
        <authorList>
            <consortium name="US DOE Joint Genome Institute"/>
            <person name="Copeland A."/>
            <person name="Lucas S."/>
            <person name="Lapidus A."/>
            <person name="Barry K."/>
            <person name="Detter J.C."/>
            <person name="Glavina del Rio T."/>
            <person name="Hammon N."/>
            <person name="Israni S."/>
            <person name="Pitluck S."/>
            <person name="Chain P."/>
            <person name="Malfatti S."/>
            <person name="Shin M."/>
            <person name="Vergez L."/>
            <person name="Schmutz J."/>
            <person name="Larimer F."/>
            <person name="Land M."/>
            <person name="Hauser L."/>
            <person name="Kyrpides N."/>
            <person name="Kim E."/>
            <person name="Smith K.S."/>
            <person name="Ingram-Smith C."/>
            <person name="Richardson P."/>
        </authorList>
    </citation>
    <scope>NUCLEOTIDE SEQUENCE [LARGE SCALE GENOMIC DNA]</scope>
    <source>
        <strain>DSM 6194 / JCM 14653 / NBRC 101360 / PT</strain>
    </source>
</reference>
<proteinExistence type="inferred from homology"/>
<evidence type="ECO:0000255" key="1">
    <source>
        <dbReference type="HAMAP-Rule" id="MF_00026"/>
    </source>
</evidence>
<feature type="chain" id="PRO_0000284562" description="DNA-binding protein Mthe_1571">
    <location>
        <begin position="1"/>
        <end position="112"/>
    </location>
</feature>
<accession>A0B9G7</accession>
<dbReference type="EMBL" id="CP000477">
    <property type="protein sequence ID" value="ABK15341.1"/>
    <property type="molecule type" value="Genomic_DNA"/>
</dbReference>
<dbReference type="RefSeq" id="WP_011696720.1">
    <property type="nucleotide sequence ID" value="NC_008553.1"/>
</dbReference>
<dbReference type="SMR" id="A0B9G7"/>
<dbReference type="STRING" id="349307.Mthe_1571"/>
<dbReference type="GeneID" id="4461863"/>
<dbReference type="KEGG" id="mtp:Mthe_1571"/>
<dbReference type="HOGENOM" id="CLU_122978_3_0_2"/>
<dbReference type="OrthoDB" id="7912at2157"/>
<dbReference type="Proteomes" id="UP000000674">
    <property type="component" value="Chromosome"/>
</dbReference>
<dbReference type="GO" id="GO:0005829">
    <property type="term" value="C:cytosol"/>
    <property type="evidence" value="ECO:0007669"/>
    <property type="project" value="TreeGrafter"/>
</dbReference>
<dbReference type="GO" id="GO:0003677">
    <property type="term" value="F:DNA binding"/>
    <property type="evidence" value="ECO:0007669"/>
    <property type="project" value="UniProtKB-UniRule"/>
</dbReference>
<dbReference type="Gene3D" id="1.10.8.140">
    <property type="entry name" value="PDCD5-like"/>
    <property type="match status" value="1"/>
</dbReference>
<dbReference type="HAMAP" id="MF_00026">
    <property type="entry name" value="dsDNA_bind"/>
    <property type="match status" value="1"/>
</dbReference>
<dbReference type="InterPro" id="IPR022889">
    <property type="entry name" value="DNA_bind_arc"/>
</dbReference>
<dbReference type="InterPro" id="IPR002836">
    <property type="entry name" value="PDCD5-like"/>
</dbReference>
<dbReference type="InterPro" id="IPR036883">
    <property type="entry name" value="PDCD5-like_sf"/>
</dbReference>
<dbReference type="NCBIfam" id="NF003268">
    <property type="entry name" value="PRK04239.1"/>
    <property type="match status" value="1"/>
</dbReference>
<dbReference type="PANTHER" id="PTHR10840">
    <property type="entry name" value="PROGRAMMED CELL DEATH PROTEIN 5"/>
    <property type="match status" value="1"/>
</dbReference>
<dbReference type="PANTHER" id="PTHR10840:SF0">
    <property type="entry name" value="PROGRAMMED CELL DEATH PROTEIN 5"/>
    <property type="match status" value="1"/>
</dbReference>
<dbReference type="Pfam" id="PF01984">
    <property type="entry name" value="dsDNA_bind"/>
    <property type="match status" value="1"/>
</dbReference>
<dbReference type="PIRSF" id="PIRSF015730">
    <property type="entry name" value="TFAR19"/>
    <property type="match status" value="1"/>
</dbReference>
<dbReference type="SUPFAM" id="SSF46950">
    <property type="entry name" value="Double-stranded DNA-binding domain"/>
    <property type="match status" value="1"/>
</dbReference>
<organism>
    <name type="scientific">Methanothrix thermoacetophila (strain DSM 6194 / JCM 14653 / NBRC 101360 / PT)</name>
    <name type="common">Methanosaeta thermophila</name>
    <dbReference type="NCBI Taxonomy" id="349307"/>
    <lineage>
        <taxon>Archaea</taxon>
        <taxon>Methanobacteriati</taxon>
        <taxon>Methanobacteriota</taxon>
        <taxon>Stenosarchaea group</taxon>
        <taxon>Methanomicrobia</taxon>
        <taxon>Methanotrichales</taxon>
        <taxon>Methanotrichaceae</taxon>
        <taxon>Methanothrix</taxon>
    </lineage>
</organism>
<protein>
    <recommendedName>
        <fullName evidence="1">DNA-binding protein Mthe_1571</fullName>
    </recommendedName>
</protein>
<sequence length="112" mass="13179">MDDELADLRRKKLEELQRRQLESQLYAAQQEQMQQELEAKKQAILRAILTPEARERLSSIRMTRPEFVAQIEAQLIMLAQSGRIRSAITDEQLKAILKQAQPKKRDIKIRRI</sequence>
<comment type="similarity">
    <text evidence="1">Belongs to the PDCD5 family.</text>
</comment>
<keyword id="KW-0238">DNA-binding</keyword>
<keyword id="KW-1185">Reference proteome</keyword>
<name>Y1571_METTP</name>
<gene>
    <name type="ordered locus">Mthe_1571</name>
</gene>